<organismHost>
    <name type="scientific">Acanthamoeba polyphaga</name>
    <name type="common">Amoeba</name>
    <dbReference type="NCBI Taxonomy" id="5757"/>
</organismHost>
<sequence>MSAIRYGDNVFITLPRLSTPMIFNGLVPHYTKPNQYEYVPILSSGSIANGDSYIIEPININNSNTALNPQSVFRLKQVSQNKYLYDNNGIVYLGNDTDNKANWSLKPVNLNATTIDYNQEFRLVNQGTGNNAVFSTINNVTMITSKYNDTTNNSIFKFLKGPFTYAQSQCCQGNILYTRPNMCGIYKQGSSVCHTIPSSQSNYPSYTTSMVGSTQSTTPVGSNPPTHRSIDKWYIIGGIFWVIVLIILVIFIIWKLK</sequence>
<keyword id="KW-0325">Glycoprotein</keyword>
<keyword id="KW-1043">Host membrane</keyword>
<keyword id="KW-0472">Membrane</keyword>
<keyword id="KW-1185">Reference proteome</keyword>
<keyword id="KW-0812">Transmembrane</keyword>
<keyword id="KW-1133">Transmembrane helix</keyword>
<keyword id="KW-0946">Virion</keyword>
<accession>Q5UPR2</accession>
<organism>
    <name type="scientific">Acanthamoeba polyphaga mimivirus</name>
    <name type="common">APMV</name>
    <dbReference type="NCBI Taxonomy" id="212035"/>
    <lineage>
        <taxon>Viruses</taxon>
        <taxon>Varidnaviria</taxon>
        <taxon>Bamfordvirae</taxon>
        <taxon>Nucleocytoviricota</taxon>
        <taxon>Megaviricetes</taxon>
        <taxon>Imitervirales</taxon>
        <taxon>Mimiviridae</taxon>
        <taxon>Megamimivirinae</taxon>
        <taxon>Mimivirus</taxon>
        <taxon>Mimivirus bradfordmassiliense</taxon>
    </lineage>
</organism>
<evidence type="ECO:0000255" key="1"/>
<evidence type="ECO:0000269" key="2">
    <source>
    </source>
</evidence>
<evidence type="ECO:0000305" key="3"/>
<protein>
    <recommendedName>
        <fullName>Uncharacterized protein L778</fullName>
    </recommendedName>
</protein>
<comment type="subcellular location">
    <subcellularLocation>
        <location evidence="3">Host membrane</location>
        <topology evidence="3">Single-pass membrane protein</topology>
    </subcellularLocation>
    <subcellularLocation>
        <location evidence="2">Virion</location>
    </subcellularLocation>
</comment>
<gene>
    <name type="ordered locus">MIMI_L778</name>
</gene>
<reference key="1">
    <citation type="journal article" date="2004" name="Science">
        <title>The 1.2-megabase genome sequence of Mimivirus.</title>
        <authorList>
            <person name="Raoult D."/>
            <person name="Audic S."/>
            <person name="Robert C."/>
            <person name="Abergel C."/>
            <person name="Renesto P."/>
            <person name="Ogata H."/>
            <person name="La Scola B."/>
            <person name="Susan M."/>
            <person name="Claverie J.-M."/>
        </authorList>
    </citation>
    <scope>NUCLEOTIDE SEQUENCE [LARGE SCALE GENOMIC DNA]</scope>
    <source>
        <strain>Rowbotham-Bradford</strain>
    </source>
</reference>
<reference key="2">
    <citation type="journal article" date="2006" name="J. Virol.">
        <title>Mimivirus giant particles incorporate a large fraction of anonymous and unique gene products.</title>
        <authorList>
            <person name="Renesto P."/>
            <person name="Abergel C."/>
            <person name="Decloquement P."/>
            <person name="Moinier D."/>
            <person name="Azza S."/>
            <person name="Ogata H."/>
            <person name="Fourquet P."/>
            <person name="Gorvel J.-P."/>
            <person name="Claverie J.-M."/>
            <person name="Raoult D."/>
        </authorList>
    </citation>
    <scope>IDENTIFICATION BY MASS SPECTROMETRY [LARGE SCALE ANALYSIS]</scope>
    <scope>SUBCELLULAR LOCATION</scope>
</reference>
<dbReference type="EMBL" id="AY653733">
    <property type="protein sequence ID" value="AAV51038.1"/>
    <property type="molecule type" value="Genomic_DNA"/>
</dbReference>
<dbReference type="SMR" id="Q5UPR2"/>
<dbReference type="KEGG" id="vg:9925438"/>
<dbReference type="OrthoDB" id="31909at10239"/>
<dbReference type="Proteomes" id="UP000001134">
    <property type="component" value="Genome"/>
</dbReference>
<dbReference type="GO" id="GO:0033644">
    <property type="term" value="C:host cell membrane"/>
    <property type="evidence" value="ECO:0007669"/>
    <property type="project" value="UniProtKB-SubCell"/>
</dbReference>
<dbReference type="GO" id="GO:0016020">
    <property type="term" value="C:membrane"/>
    <property type="evidence" value="ECO:0007669"/>
    <property type="project" value="UniProtKB-KW"/>
</dbReference>
<dbReference type="GO" id="GO:0044423">
    <property type="term" value="C:virion component"/>
    <property type="evidence" value="ECO:0007669"/>
    <property type="project" value="UniProtKB-KW"/>
</dbReference>
<name>YL778_MIMIV</name>
<proteinExistence type="evidence at protein level"/>
<feature type="chain" id="PRO_0000247377" description="Uncharacterized protein L778">
    <location>
        <begin position="1"/>
        <end position="257"/>
    </location>
</feature>
<feature type="transmembrane region" description="Helical" evidence="1">
    <location>
        <begin position="233"/>
        <end position="253"/>
    </location>
</feature>
<feature type="glycosylation site" description="N-linked (GlcNAc...) asparagine; by host" evidence="1">
    <location>
        <position position="61"/>
    </location>
</feature>
<feature type="glycosylation site" description="N-linked (GlcNAc...) asparagine; by host" evidence="1">
    <location>
        <position position="95"/>
    </location>
</feature>
<feature type="glycosylation site" description="N-linked (GlcNAc...) asparagine; by host" evidence="1">
    <location>
        <position position="102"/>
    </location>
</feature>
<feature type="glycosylation site" description="N-linked (GlcNAc...) asparagine; by host" evidence="1">
    <location>
        <position position="111"/>
    </location>
</feature>
<feature type="glycosylation site" description="N-linked (GlcNAc...) asparagine; by host" evidence="1">
    <location>
        <position position="139"/>
    </location>
</feature>
<feature type="glycosylation site" description="N-linked (GlcNAc...) asparagine; by host" evidence="1">
    <location>
        <position position="148"/>
    </location>
</feature>
<feature type="glycosylation site" description="N-linked (GlcNAc...) asparagine; by host" evidence="1">
    <location>
        <position position="152"/>
    </location>
</feature>